<feature type="chain" id="PRO_0000097891" description="Redox-sensing transcriptional repressor Rex 1">
    <location>
        <begin position="1"/>
        <end position="216"/>
    </location>
</feature>
<feature type="DNA-binding region" description="H-T-H motif" evidence="1">
    <location>
        <begin position="16"/>
        <end position="55"/>
    </location>
</feature>
<feature type="binding site" evidence="1">
    <location>
        <begin position="90"/>
        <end position="95"/>
    </location>
    <ligand>
        <name>NAD(+)</name>
        <dbReference type="ChEBI" id="CHEBI:57540"/>
    </ligand>
</feature>
<name>REX1_ENTFA</name>
<protein>
    <recommendedName>
        <fullName evidence="1">Redox-sensing transcriptional repressor Rex 1</fullName>
    </recommendedName>
</protein>
<gene>
    <name evidence="1" type="primary">rex1</name>
    <name type="ordered locus">EF_2638</name>
</gene>
<keyword id="KW-0963">Cytoplasm</keyword>
<keyword id="KW-0238">DNA-binding</keyword>
<keyword id="KW-0520">NAD</keyword>
<keyword id="KW-1185">Reference proteome</keyword>
<keyword id="KW-0678">Repressor</keyword>
<keyword id="KW-0804">Transcription</keyword>
<keyword id="KW-0805">Transcription regulation</keyword>
<sequence>MKDQVIPKATARRLPLYYRYLRMLHDTGKNKVSSTELSEAVQVDSATIRRDFSYFGELGKRGYGYDVENLMNFFAKTLNEDELTNVALIGVGNLGSALLKYKFHQSNSIRVSCAFDVNEDIVGRIVDGIPVYPMEDMMEQIRVQQIEVAILTIPARKAQEVVNKLAEAGVKGILNFTAARLVAPPEVLIQNVDLTNELQTLIYFLHHDNELIDEEE</sequence>
<accession>Q830Y0</accession>
<reference key="1">
    <citation type="journal article" date="2003" name="Science">
        <title>Role of mobile DNA in the evolution of vancomycin-resistant Enterococcus faecalis.</title>
        <authorList>
            <person name="Paulsen I.T."/>
            <person name="Banerjei L."/>
            <person name="Myers G.S.A."/>
            <person name="Nelson K.E."/>
            <person name="Seshadri R."/>
            <person name="Read T.D."/>
            <person name="Fouts D.E."/>
            <person name="Eisen J.A."/>
            <person name="Gill S.R."/>
            <person name="Heidelberg J.F."/>
            <person name="Tettelin H."/>
            <person name="Dodson R.J."/>
            <person name="Umayam L.A."/>
            <person name="Brinkac L.M."/>
            <person name="Beanan M.J."/>
            <person name="Daugherty S.C."/>
            <person name="DeBoy R.T."/>
            <person name="Durkin S.A."/>
            <person name="Kolonay J.F."/>
            <person name="Madupu R."/>
            <person name="Nelson W.C."/>
            <person name="Vamathevan J.J."/>
            <person name="Tran B."/>
            <person name="Upton J."/>
            <person name="Hansen T."/>
            <person name="Shetty J."/>
            <person name="Khouri H.M."/>
            <person name="Utterback T.R."/>
            <person name="Radune D."/>
            <person name="Ketchum K.A."/>
            <person name="Dougherty B.A."/>
            <person name="Fraser C.M."/>
        </authorList>
    </citation>
    <scope>NUCLEOTIDE SEQUENCE [LARGE SCALE GENOMIC DNA]</scope>
    <source>
        <strain>ATCC 700802 / V583</strain>
    </source>
</reference>
<dbReference type="EMBL" id="AE016830">
    <property type="protein sequence ID" value="AAO82346.1"/>
    <property type="molecule type" value="Genomic_DNA"/>
</dbReference>
<dbReference type="RefSeq" id="NP_816276.1">
    <property type="nucleotide sequence ID" value="NC_004668.1"/>
</dbReference>
<dbReference type="RefSeq" id="WP_002356528.1">
    <property type="nucleotide sequence ID" value="NZ_KE136528.1"/>
</dbReference>
<dbReference type="SMR" id="Q830Y0"/>
<dbReference type="STRING" id="226185.EF_2638"/>
<dbReference type="EnsemblBacteria" id="AAO82346">
    <property type="protein sequence ID" value="AAO82346"/>
    <property type="gene ID" value="EF_2638"/>
</dbReference>
<dbReference type="KEGG" id="efa:EF2638"/>
<dbReference type="PATRIC" id="fig|226185.45.peg.922"/>
<dbReference type="eggNOG" id="COG2344">
    <property type="taxonomic scope" value="Bacteria"/>
</dbReference>
<dbReference type="HOGENOM" id="CLU_061534_1_1_9"/>
<dbReference type="Proteomes" id="UP000001415">
    <property type="component" value="Chromosome"/>
</dbReference>
<dbReference type="GO" id="GO:0005737">
    <property type="term" value="C:cytoplasm"/>
    <property type="evidence" value="ECO:0007669"/>
    <property type="project" value="UniProtKB-SubCell"/>
</dbReference>
<dbReference type="GO" id="GO:0003677">
    <property type="term" value="F:DNA binding"/>
    <property type="evidence" value="ECO:0007669"/>
    <property type="project" value="UniProtKB-UniRule"/>
</dbReference>
<dbReference type="GO" id="GO:0003700">
    <property type="term" value="F:DNA-binding transcription factor activity"/>
    <property type="evidence" value="ECO:0007669"/>
    <property type="project" value="UniProtKB-UniRule"/>
</dbReference>
<dbReference type="GO" id="GO:0045892">
    <property type="term" value="P:negative regulation of DNA-templated transcription"/>
    <property type="evidence" value="ECO:0007669"/>
    <property type="project" value="InterPro"/>
</dbReference>
<dbReference type="GO" id="GO:0051775">
    <property type="term" value="P:response to redox state"/>
    <property type="evidence" value="ECO:0007669"/>
    <property type="project" value="InterPro"/>
</dbReference>
<dbReference type="Gene3D" id="3.40.50.720">
    <property type="entry name" value="NAD(P)-binding Rossmann-like Domain"/>
    <property type="match status" value="1"/>
</dbReference>
<dbReference type="Gene3D" id="1.10.10.10">
    <property type="entry name" value="Winged helix-like DNA-binding domain superfamily/Winged helix DNA-binding domain"/>
    <property type="match status" value="1"/>
</dbReference>
<dbReference type="HAMAP" id="MF_01131">
    <property type="entry name" value="Rex"/>
    <property type="match status" value="1"/>
</dbReference>
<dbReference type="InterPro" id="IPR003781">
    <property type="entry name" value="CoA-bd"/>
</dbReference>
<dbReference type="InterPro" id="IPR036291">
    <property type="entry name" value="NAD(P)-bd_dom_sf"/>
</dbReference>
<dbReference type="InterPro" id="IPR009718">
    <property type="entry name" value="Rex_DNA-bd_C_dom"/>
</dbReference>
<dbReference type="InterPro" id="IPR022876">
    <property type="entry name" value="Tscrpt_rep_Rex"/>
</dbReference>
<dbReference type="InterPro" id="IPR036388">
    <property type="entry name" value="WH-like_DNA-bd_sf"/>
</dbReference>
<dbReference type="InterPro" id="IPR036390">
    <property type="entry name" value="WH_DNA-bd_sf"/>
</dbReference>
<dbReference type="NCBIfam" id="NF003989">
    <property type="entry name" value="PRK05472.1-3"/>
    <property type="match status" value="1"/>
</dbReference>
<dbReference type="NCBIfam" id="NF003991">
    <property type="entry name" value="PRK05472.1-5"/>
    <property type="match status" value="1"/>
</dbReference>
<dbReference type="NCBIfam" id="NF003994">
    <property type="entry name" value="PRK05472.2-3"/>
    <property type="match status" value="1"/>
</dbReference>
<dbReference type="NCBIfam" id="NF003995">
    <property type="entry name" value="PRK05472.2-4"/>
    <property type="match status" value="1"/>
</dbReference>
<dbReference type="NCBIfam" id="NF003996">
    <property type="entry name" value="PRK05472.2-5"/>
    <property type="match status" value="1"/>
</dbReference>
<dbReference type="PANTHER" id="PTHR35786">
    <property type="entry name" value="REDOX-SENSING TRANSCRIPTIONAL REPRESSOR REX"/>
    <property type="match status" value="1"/>
</dbReference>
<dbReference type="PANTHER" id="PTHR35786:SF1">
    <property type="entry name" value="REDOX-SENSING TRANSCRIPTIONAL REPRESSOR REX 1"/>
    <property type="match status" value="1"/>
</dbReference>
<dbReference type="Pfam" id="PF02629">
    <property type="entry name" value="CoA_binding"/>
    <property type="match status" value="1"/>
</dbReference>
<dbReference type="Pfam" id="PF06971">
    <property type="entry name" value="Put_DNA-bind_N"/>
    <property type="match status" value="1"/>
</dbReference>
<dbReference type="SMART" id="SM00881">
    <property type="entry name" value="CoA_binding"/>
    <property type="match status" value="1"/>
</dbReference>
<dbReference type="SUPFAM" id="SSF51735">
    <property type="entry name" value="NAD(P)-binding Rossmann-fold domains"/>
    <property type="match status" value="1"/>
</dbReference>
<dbReference type="SUPFAM" id="SSF46785">
    <property type="entry name" value="Winged helix' DNA-binding domain"/>
    <property type="match status" value="1"/>
</dbReference>
<organism>
    <name type="scientific">Enterococcus faecalis (strain ATCC 700802 / V583)</name>
    <dbReference type="NCBI Taxonomy" id="226185"/>
    <lineage>
        <taxon>Bacteria</taxon>
        <taxon>Bacillati</taxon>
        <taxon>Bacillota</taxon>
        <taxon>Bacilli</taxon>
        <taxon>Lactobacillales</taxon>
        <taxon>Enterococcaceae</taxon>
        <taxon>Enterococcus</taxon>
    </lineage>
</organism>
<proteinExistence type="inferred from homology"/>
<comment type="function">
    <text evidence="1">Modulates transcription in response to changes in cellular NADH/NAD(+) redox state.</text>
</comment>
<comment type="subunit">
    <text evidence="1">Homodimer.</text>
</comment>
<comment type="subcellular location">
    <subcellularLocation>
        <location evidence="1">Cytoplasm</location>
    </subcellularLocation>
</comment>
<comment type="similarity">
    <text evidence="1">Belongs to the transcriptional regulatory Rex family.</text>
</comment>
<evidence type="ECO:0000255" key="1">
    <source>
        <dbReference type="HAMAP-Rule" id="MF_01131"/>
    </source>
</evidence>